<accession>C5DDS4</accession>
<evidence type="ECO:0000255" key="1">
    <source>
        <dbReference type="HAMAP-Rule" id="MF_03117"/>
    </source>
</evidence>
<evidence type="ECO:0000305" key="2"/>
<keyword id="KW-0028">Amino-acid biosynthesis</keyword>
<keyword id="KW-0963">Cytoplasm</keyword>
<keyword id="KW-0378">Hydrolase</keyword>
<keyword id="KW-0460">Magnesium</keyword>
<keyword id="KW-0479">Metal-binding</keyword>
<keyword id="KW-0486">Methionine biosynthesis</keyword>
<keyword id="KW-0539">Nucleus</keyword>
<keyword id="KW-1185">Reference proteome</keyword>
<dbReference type="EC" id="3.1.3.77" evidence="1"/>
<dbReference type="EMBL" id="CU928167">
    <property type="protein sequence ID" value="CAR21935.1"/>
    <property type="status" value="ALT_INIT"/>
    <property type="molecule type" value="Genomic_DNA"/>
</dbReference>
<dbReference type="RefSeq" id="XP_002552373.1">
    <property type="nucleotide sequence ID" value="XM_002552327.1"/>
</dbReference>
<dbReference type="SMR" id="C5DDS4"/>
<dbReference type="FunCoup" id="C5DDS4">
    <property type="interactions" value="685"/>
</dbReference>
<dbReference type="STRING" id="559295.C5DDS4"/>
<dbReference type="GeneID" id="8291237"/>
<dbReference type="KEGG" id="lth:KLTH0C03388g"/>
<dbReference type="eggNOG" id="KOG2630">
    <property type="taxonomic scope" value="Eukaryota"/>
</dbReference>
<dbReference type="HOGENOM" id="CLU_023273_1_1_1"/>
<dbReference type="InParanoid" id="C5DDS4"/>
<dbReference type="OrthoDB" id="272500at2759"/>
<dbReference type="UniPathway" id="UPA00904">
    <property type="reaction ID" value="UER00876"/>
</dbReference>
<dbReference type="UniPathway" id="UPA00904">
    <property type="reaction ID" value="UER00877"/>
</dbReference>
<dbReference type="Proteomes" id="UP000002036">
    <property type="component" value="Chromosome C"/>
</dbReference>
<dbReference type="GO" id="GO:0005737">
    <property type="term" value="C:cytoplasm"/>
    <property type="evidence" value="ECO:0007669"/>
    <property type="project" value="UniProtKB-SubCell"/>
</dbReference>
<dbReference type="GO" id="GO:0005634">
    <property type="term" value="C:nucleus"/>
    <property type="evidence" value="ECO:0007669"/>
    <property type="project" value="UniProtKB-SubCell"/>
</dbReference>
<dbReference type="GO" id="GO:0043874">
    <property type="term" value="F:acireductone synthase activity"/>
    <property type="evidence" value="ECO:0007669"/>
    <property type="project" value="UniProtKB-EC"/>
</dbReference>
<dbReference type="GO" id="GO:0000287">
    <property type="term" value="F:magnesium ion binding"/>
    <property type="evidence" value="ECO:0007669"/>
    <property type="project" value="UniProtKB-UniRule"/>
</dbReference>
<dbReference type="GO" id="GO:0019509">
    <property type="term" value="P:L-methionine salvage from methylthioadenosine"/>
    <property type="evidence" value="ECO:0007669"/>
    <property type="project" value="UniProtKB-UniRule"/>
</dbReference>
<dbReference type="CDD" id="cd01629">
    <property type="entry name" value="HAD_EP"/>
    <property type="match status" value="1"/>
</dbReference>
<dbReference type="Gene3D" id="1.10.720.60">
    <property type="match status" value="1"/>
</dbReference>
<dbReference type="Gene3D" id="3.40.50.1000">
    <property type="entry name" value="HAD superfamily/HAD-like"/>
    <property type="match status" value="1"/>
</dbReference>
<dbReference type="HAMAP" id="MF_03117">
    <property type="entry name" value="Salvage_MtnC_euk"/>
    <property type="match status" value="1"/>
</dbReference>
<dbReference type="InterPro" id="IPR023943">
    <property type="entry name" value="Enolase-ppase_E1"/>
</dbReference>
<dbReference type="InterPro" id="IPR027511">
    <property type="entry name" value="ENOPH1_eukaryotes"/>
</dbReference>
<dbReference type="InterPro" id="IPR036412">
    <property type="entry name" value="HAD-like_sf"/>
</dbReference>
<dbReference type="InterPro" id="IPR023214">
    <property type="entry name" value="HAD_sf"/>
</dbReference>
<dbReference type="NCBIfam" id="TIGR01691">
    <property type="entry name" value="enolase-ppase"/>
    <property type="match status" value="1"/>
</dbReference>
<dbReference type="PANTHER" id="PTHR20371">
    <property type="entry name" value="ENOLASE-PHOSPHATASE E1"/>
    <property type="match status" value="1"/>
</dbReference>
<dbReference type="PANTHER" id="PTHR20371:SF1">
    <property type="entry name" value="ENOLASE-PHOSPHATASE E1"/>
    <property type="match status" value="1"/>
</dbReference>
<dbReference type="Pfam" id="PF00702">
    <property type="entry name" value="Hydrolase"/>
    <property type="match status" value="1"/>
</dbReference>
<dbReference type="SFLD" id="SFLDG01133">
    <property type="entry name" value="C1.5.4:_Enolase-phosphatase_Li"/>
    <property type="match status" value="1"/>
</dbReference>
<dbReference type="SFLD" id="SFLDG01129">
    <property type="entry name" value="C1.5:_HAD__Beta-PGM__Phosphata"/>
    <property type="match status" value="1"/>
</dbReference>
<dbReference type="SUPFAM" id="SSF56784">
    <property type="entry name" value="HAD-like"/>
    <property type="match status" value="1"/>
</dbReference>
<proteinExistence type="inferred from homology"/>
<comment type="function">
    <text evidence="1">Bifunctional enzyme that catalyzes the enolization of 2,3-diketo-5-methylthiopentyl-1-phosphate (DK-MTP-1-P) into the intermediate 2-hydroxy-3-keto-5-methylthiopentenyl-1-phosphate (HK-MTPenyl-1-P), which is then dephosphorylated to form the acireductone 1,2-dihydroxy-3-keto-5-methylthiopentene (DHK-MTPene).</text>
</comment>
<comment type="catalytic activity">
    <reaction evidence="1">
        <text>5-methylsulfanyl-2,3-dioxopentyl phosphate + H2O = 1,2-dihydroxy-5-(methylsulfanyl)pent-1-en-3-one + phosphate</text>
        <dbReference type="Rhea" id="RHEA:21700"/>
        <dbReference type="ChEBI" id="CHEBI:15377"/>
        <dbReference type="ChEBI" id="CHEBI:43474"/>
        <dbReference type="ChEBI" id="CHEBI:49252"/>
        <dbReference type="ChEBI" id="CHEBI:58828"/>
        <dbReference type="EC" id="3.1.3.77"/>
    </reaction>
</comment>
<comment type="cofactor">
    <cofactor evidence="1">
        <name>Mg(2+)</name>
        <dbReference type="ChEBI" id="CHEBI:18420"/>
    </cofactor>
    <text evidence="1">Binds 1 Mg(2+) ion per subunit.</text>
</comment>
<comment type="pathway">
    <text evidence="1">Amino-acid biosynthesis; L-methionine biosynthesis via salvage pathway; L-methionine from S-methyl-5-thio-alpha-D-ribose 1-phosphate: step 3/6.</text>
</comment>
<comment type="pathway">
    <text evidence="1">Amino-acid biosynthesis; L-methionine biosynthesis via salvage pathway; L-methionine from S-methyl-5-thio-alpha-D-ribose 1-phosphate: step 4/6.</text>
</comment>
<comment type="subunit">
    <text evidence="1">Monomer.</text>
</comment>
<comment type="subcellular location">
    <subcellularLocation>
        <location evidence="1">Cytoplasm</location>
    </subcellularLocation>
    <subcellularLocation>
        <location evidence="1">Nucleus</location>
    </subcellularLocation>
</comment>
<comment type="similarity">
    <text evidence="1">Belongs to the HAD-like hydrolase superfamily. MasA/MtnC family.</text>
</comment>
<comment type="sequence caution" evidence="2">
    <conflict type="erroneous initiation">
        <sequence resource="EMBL-CDS" id="CAR21935"/>
    </conflict>
    <text>Extended N-terminus.</text>
</comment>
<reference key="1">
    <citation type="journal article" date="2009" name="Genome Res.">
        <title>Comparative genomics of protoploid Saccharomycetaceae.</title>
        <authorList>
            <consortium name="The Genolevures Consortium"/>
            <person name="Souciet J.-L."/>
            <person name="Dujon B."/>
            <person name="Gaillardin C."/>
            <person name="Johnston M."/>
            <person name="Baret P.V."/>
            <person name="Cliften P."/>
            <person name="Sherman D.J."/>
            <person name="Weissenbach J."/>
            <person name="Westhof E."/>
            <person name="Wincker P."/>
            <person name="Jubin C."/>
            <person name="Poulain J."/>
            <person name="Barbe V."/>
            <person name="Segurens B."/>
            <person name="Artiguenave F."/>
            <person name="Anthouard V."/>
            <person name="Vacherie B."/>
            <person name="Val M.-E."/>
            <person name="Fulton R.S."/>
            <person name="Minx P."/>
            <person name="Wilson R."/>
            <person name="Durrens P."/>
            <person name="Jean G."/>
            <person name="Marck C."/>
            <person name="Martin T."/>
            <person name="Nikolski M."/>
            <person name="Rolland T."/>
            <person name="Seret M.-L."/>
            <person name="Casaregola S."/>
            <person name="Despons L."/>
            <person name="Fairhead C."/>
            <person name="Fischer G."/>
            <person name="Lafontaine I."/>
            <person name="Leh V."/>
            <person name="Lemaire M."/>
            <person name="de Montigny J."/>
            <person name="Neuveglise C."/>
            <person name="Thierry A."/>
            <person name="Blanc-Lenfle I."/>
            <person name="Bleykasten C."/>
            <person name="Diffels J."/>
            <person name="Fritsch E."/>
            <person name="Frangeul L."/>
            <person name="Goeffon A."/>
            <person name="Jauniaux N."/>
            <person name="Kachouri-Lafond R."/>
            <person name="Payen C."/>
            <person name="Potier S."/>
            <person name="Pribylova L."/>
            <person name="Ozanne C."/>
            <person name="Richard G.-F."/>
            <person name="Sacerdot C."/>
            <person name="Straub M.-L."/>
            <person name="Talla E."/>
        </authorList>
    </citation>
    <scope>NUCLEOTIDE SEQUENCE [LARGE SCALE GENOMIC DNA]</scope>
    <source>
        <strain>ATCC 56472 / CBS 6340 / NRRL Y-8284</strain>
    </source>
</reference>
<gene>
    <name evidence="1" type="primary">UTR4</name>
    <name type="ordered locus">KLTH0C03388g</name>
</gene>
<protein>
    <recommendedName>
        <fullName evidence="1">Enolase-phosphatase E1</fullName>
        <ecNumber evidence="1">3.1.3.77</ecNumber>
    </recommendedName>
    <alternativeName>
        <fullName evidence="1">2,3-diketo-5-methylthio-1-phosphopentane phosphatase</fullName>
    </alternativeName>
</protein>
<name>ENOPH_LACTC</name>
<organism>
    <name type="scientific">Lachancea thermotolerans (strain ATCC 56472 / CBS 6340 / NRRL Y-8284)</name>
    <name type="common">Yeast</name>
    <name type="synonym">Kluyveromyces thermotolerans</name>
    <dbReference type="NCBI Taxonomy" id="559295"/>
    <lineage>
        <taxon>Eukaryota</taxon>
        <taxon>Fungi</taxon>
        <taxon>Dikarya</taxon>
        <taxon>Ascomycota</taxon>
        <taxon>Saccharomycotina</taxon>
        <taxon>Saccharomycetes</taxon>
        <taxon>Saccharomycetales</taxon>
        <taxon>Saccharomycetaceae</taxon>
        <taxon>Lachancea</taxon>
    </lineage>
</organism>
<feature type="chain" id="PRO_0000394001" description="Enolase-phosphatase E1">
    <location>
        <begin position="1"/>
        <end position="217"/>
    </location>
</feature>
<feature type="binding site" evidence="1">
    <location>
        <position position="9"/>
    </location>
    <ligand>
        <name>Mg(2+)</name>
        <dbReference type="ChEBI" id="CHEBI:18420"/>
    </ligand>
</feature>
<feature type="binding site" evidence="1">
    <location>
        <position position="11"/>
    </location>
    <ligand>
        <name>Mg(2+)</name>
        <dbReference type="ChEBI" id="CHEBI:18420"/>
    </ligand>
</feature>
<feature type="binding site" evidence="1">
    <location>
        <begin position="112"/>
        <end position="113"/>
    </location>
    <ligand>
        <name>substrate</name>
    </ligand>
</feature>
<feature type="binding site" evidence="1">
    <location>
        <position position="151"/>
    </location>
    <ligand>
        <name>substrate</name>
    </ligand>
</feature>
<feature type="binding site" evidence="1">
    <location>
        <position position="176"/>
    </location>
    <ligand>
        <name>Mg(2+)</name>
        <dbReference type="ChEBI" id="CHEBI:18420"/>
    </ligand>
</feature>
<sequence length="217" mass="24241">MAYAAVLLDIEGTVCPISFVKESLFPFFLKQVDTLCSSQDLQVQRLLTQFQVDDVAGHIRSLVARDVKDPILKQLQGLVWENGYKDGQIKAPVYDDAIKFIKNSDVPVYIYSSGSVKAQKLLFQYVESRSNTLDLRPFIKGYFDINTSGVKTQSESYARIANNVGIKPNGVLFISDNPFELDAAKITGMQTMLAVRPGNSEVRDALKYNPVTNFDDL</sequence>